<reference key="1">
    <citation type="journal article" date="1996" name="Science">
        <title>Complete genome sequence of the methanogenic archaeon, Methanococcus jannaschii.</title>
        <authorList>
            <person name="Bult C.J."/>
            <person name="White O."/>
            <person name="Olsen G.J."/>
            <person name="Zhou L."/>
            <person name="Fleischmann R.D."/>
            <person name="Sutton G.G."/>
            <person name="Blake J.A."/>
            <person name="FitzGerald L.M."/>
            <person name="Clayton R.A."/>
            <person name="Gocayne J.D."/>
            <person name="Kerlavage A.R."/>
            <person name="Dougherty B.A."/>
            <person name="Tomb J.-F."/>
            <person name="Adams M.D."/>
            <person name="Reich C.I."/>
            <person name="Overbeek R."/>
            <person name="Kirkness E.F."/>
            <person name="Weinstock K.G."/>
            <person name="Merrick J.M."/>
            <person name="Glodek A."/>
            <person name="Scott J.L."/>
            <person name="Geoghagen N.S.M."/>
            <person name="Weidman J.F."/>
            <person name="Fuhrmann J.L."/>
            <person name="Nguyen D."/>
            <person name="Utterback T.R."/>
            <person name="Kelley J.M."/>
            <person name="Peterson J.D."/>
            <person name="Sadow P.W."/>
            <person name="Hanna M.C."/>
            <person name="Cotton M.D."/>
            <person name="Roberts K.M."/>
            <person name="Hurst M.A."/>
            <person name="Kaine B.P."/>
            <person name="Borodovsky M."/>
            <person name="Klenk H.-P."/>
            <person name="Fraser C.M."/>
            <person name="Smith H.O."/>
            <person name="Woese C.R."/>
            <person name="Venter J.C."/>
        </authorList>
    </citation>
    <scope>NUCLEOTIDE SEQUENCE [LARGE SCALE GENOMIC DNA]</scope>
    <source>
        <strain>ATCC 43067 / DSM 2661 / JAL-1 / JCM 10045 / NBRC 100440</strain>
    </source>
</reference>
<reference key="2">
    <citation type="journal article" date="1997" name="Science">
        <title>Evidence for a family of archaeal ATPases.</title>
        <authorList>
            <person name="Koonin E.V."/>
        </authorList>
    </citation>
    <scope>SIMILARITY</scope>
</reference>
<name>Y801_METJA</name>
<proteinExistence type="inferred from homology"/>
<accession>Q58211</accession>
<dbReference type="EMBL" id="L77117">
    <property type="protein sequence ID" value="AAB98799.1"/>
    <property type="molecule type" value="Genomic_DNA"/>
</dbReference>
<dbReference type="PIR" id="A64400">
    <property type="entry name" value="A64400"/>
</dbReference>
<dbReference type="RefSeq" id="WP_010870311.1">
    <property type="nucleotide sequence ID" value="NC_000909.1"/>
</dbReference>
<dbReference type="STRING" id="243232.MJ_0801"/>
<dbReference type="PaxDb" id="243232-MJ_0801"/>
<dbReference type="EnsemblBacteria" id="AAB98799">
    <property type="protein sequence ID" value="AAB98799"/>
    <property type="gene ID" value="MJ_0801"/>
</dbReference>
<dbReference type="GeneID" id="1451683"/>
<dbReference type="KEGG" id="mja:MJ_0801"/>
<dbReference type="eggNOG" id="arCOG03407">
    <property type="taxonomic scope" value="Archaea"/>
</dbReference>
<dbReference type="HOGENOM" id="CLU_068608_0_0_2"/>
<dbReference type="InParanoid" id="Q58211"/>
<dbReference type="OrthoDB" id="65550at2157"/>
<dbReference type="PhylomeDB" id="Q58211"/>
<dbReference type="Proteomes" id="UP000000805">
    <property type="component" value="Chromosome"/>
</dbReference>
<dbReference type="GO" id="GO:0005524">
    <property type="term" value="F:ATP binding"/>
    <property type="evidence" value="ECO:0007669"/>
    <property type="project" value="UniProtKB-KW"/>
</dbReference>
<dbReference type="GO" id="GO:0016887">
    <property type="term" value="F:ATP hydrolysis activity"/>
    <property type="evidence" value="ECO:0007669"/>
    <property type="project" value="InterPro"/>
</dbReference>
<dbReference type="Gene3D" id="3.40.50.300">
    <property type="entry name" value="P-loop containing nucleotide triphosphate hydrolases"/>
    <property type="match status" value="1"/>
</dbReference>
<dbReference type="Gene3D" id="1.10.10.10">
    <property type="entry name" value="Winged helix-like DNA-binding domain superfamily/Winged helix DNA-binding domain"/>
    <property type="match status" value="1"/>
</dbReference>
<dbReference type="InterPro" id="IPR003593">
    <property type="entry name" value="AAA+_ATPase"/>
</dbReference>
<dbReference type="InterPro" id="IPR011579">
    <property type="entry name" value="ATPase_dom"/>
</dbReference>
<dbReference type="InterPro" id="IPR049081">
    <property type="entry name" value="MJ1010-like_2nd"/>
</dbReference>
<dbReference type="InterPro" id="IPR027417">
    <property type="entry name" value="P-loop_NTPase"/>
</dbReference>
<dbReference type="InterPro" id="IPR036388">
    <property type="entry name" value="WH-like_DNA-bd_sf"/>
</dbReference>
<dbReference type="PANTHER" id="PTHR34301:SF8">
    <property type="entry name" value="ATPASE DOMAIN-CONTAINING PROTEIN"/>
    <property type="match status" value="1"/>
</dbReference>
<dbReference type="PANTHER" id="PTHR34301">
    <property type="entry name" value="DNA-BINDING PROTEIN-RELATED"/>
    <property type="match status" value="1"/>
</dbReference>
<dbReference type="Pfam" id="PF01637">
    <property type="entry name" value="ATPase_2"/>
    <property type="match status" value="1"/>
</dbReference>
<dbReference type="Pfam" id="PF21690">
    <property type="entry name" value="MJ1010-like_2nd"/>
    <property type="match status" value="1"/>
</dbReference>
<dbReference type="SMART" id="SM00382">
    <property type="entry name" value="AAA"/>
    <property type="match status" value="1"/>
</dbReference>
<dbReference type="SUPFAM" id="SSF52540">
    <property type="entry name" value="P-loop containing nucleoside triphosphate hydrolases"/>
    <property type="match status" value="1"/>
</dbReference>
<comment type="similarity">
    <text evidence="2">Belongs to the archaeal ATPase family.</text>
</comment>
<protein>
    <recommendedName>
        <fullName>Uncharacterized ATP-binding protein MJ0801</fullName>
    </recommendedName>
</protein>
<evidence type="ECO:0000255" key="1"/>
<evidence type="ECO:0000305" key="2"/>
<organism>
    <name type="scientific">Methanocaldococcus jannaschii (strain ATCC 43067 / DSM 2661 / JAL-1 / JCM 10045 / NBRC 100440)</name>
    <name type="common">Methanococcus jannaschii</name>
    <dbReference type="NCBI Taxonomy" id="243232"/>
    <lineage>
        <taxon>Archaea</taxon>
        <taxon>Methanobacteriati</taxon>
        <taxon>Methanobacteriota</taxon>
        <taxon>Methanomada group</taxon>
        <taxon>Methanococci</taxon>
        <taxon>Methanococcales</taxon>
        <taxon>Methanocaldococcaceae</taxon>
        <taxon>Methanocaldococcus</taxon>
    </lineage>
</organism>
<feature type="chain" id="PRO_0000184671" description="Uncharacterized ATP-binding protein MJ0801">
    <location>
        <begin position="1"/>
        <end position="379"/>
    </location>
</feature>
<feature type="binding site" evidence="1">
    <location>
        <begin position="29"/>
        <end position="36"/>
    </location>
    <ligand>
        <name>ATP</name>
        <dbReference type="ChEBI" id="CHEBI:30616"/>
    </ligand>
</feature>
<sequence length="379" mass="44716">MKFFDREREINEILHILNREPDDIYFIYGPLNSGKTALIKHIIENKLSDDYKVFYINFRTYLISEKREFIEAIFTTKKDDFFEKIKDKDEVLNLITKGVRILTGIPIPEVEFDKLFEEKINDAFQYLNSLLLEVKKSGKKPILIFDELQMIKDVVLNTENQRFSAFPSLRFGNGQKYLLKELFQFLVSLTKEQHLCHVFCLSSDSLFIEYVYSTGELEGRAKYLLVDDFDKETALKFMDFLAVENNINLTNEDKELIYSYVGGKPKDIKYVVEESKFKDLREILEFMLKDAVQKLDMFLDMLNYSKPKVDVGDEVIEIKKDNVIEALKLFKDEYEVSKKHIPVPVYTYLIKRNILFLNPIEGILKPQSYLVWNAIKRLL</sequence>
<keyword id="KW-0067">ATP-binding</keyword>
<keyword id="KW-0547">Nucleotide-binding</keyword>
<keyword id="KW-1185">Reference proteome</keyword>
<gene>
    <name type="ordered locus">MJ0801</name>
</gene>